<dbReference type="EMBL" id="CP001396">
    <property type="protein sequence ID" value="ACR65265.1"/>
    <property type="molecule type" value="Genomic_DNA"/>
</dbReference>
<dbReference type="RefSeq" id="WP_000387388.1">
    <property type="nucleotide sequence ID" value="NC_012759.1"/>
</dbReference>
<dbReference type="SMR" id="C4ZV90"/>
<dbReference type="GeneID" id="93775479"/>
<dbReference type="KEGG" id="ebw:BWG_1176"/>
<dbReference type="HOGENOM" id="CLU_007127_2_0_6"/>
<dbReference type="GO" id="GO:0005886">
    <property type="term" value="C:plasma membrane"/>
    <property type="evidence" value="ECO:0007669"/>
    <property type="project" value="UniProtKB-SubCell"/>
</dbReference>
<dbReference type="GO" id="GO:0050897">
    <property type="term" value="F:cobalt ion binding"/>
    <property type="evidence" value="ECO:0007669"/>
    <property type="project" value="TreeGrafter"/>
</dbReference>
<dbReference type="GO" id="GO:0015087">
    <property type="term" value="F:cobalt ion transmembrane transporter activity"/>
    <property type="evidence" value="ECO:0007669"/>
    <property type="project" value="TreeGrafter"/>
</dbReference>
<dbReference type="GO" id="GO:0000287">
    <property type="term" value="F:magnesium ion binding"/>
    <property type="evidence" value="ECO:0007669"/>
    <property type="project" value="TreeGrafter"/>
</dbReference>
<dbReference type="GO" id="GO:0015095">
    <property type="term" value="F:magnesium ion transmembrane transporter activity"/>
    <property type="evidence" value="ECO:0007669"/>
    <property type="project" value="TreeGrafter"/>
</dbReference>
<dbReference type="GO" id="GO:0005385">
    <property type="term" value="F:zinc ion transmembrane transporter activity"/>
    <property type="evidence" value="ECO:0007669"/>
    <property type="project" value="UniProtKB-UniRule"/>
</dbReference>
<dbReference type="CDD" id="cd12833">
    <property type="entry name" value="ZntB-like_1"/>
    <property type="match status" value="1"/>
</dbReference>
<dbReference type="FunFam" id="1.20.58.340:FF:000002">
    <property type="entry name" value="Zinc transport protein ZntB"/>
    <property type="match status" value="1"/>
</dbReference>
<dbReference type="FunFam" id="1.20.58.340:FF:000003">
    <property type="entry name" value="Zinc transport protein ZntB"/>
    <property type="match status" value="1"/>
</dbReference>
<dbReference type="FunFam" id="3.30.460.20:FF:000001">
    <property type="entry name" value="Zinc transport protein ZntB"/>
    <property type="match status" value="1"/>
</dbReference>
<dbReference type="Gene3D" id="3.30.460.20">
    <property type="entry name" value="CorA soluble domain-like"/>
    <property type="match status" value="1"/>
</dbReference>
<dbReference type="Gene3D" id="1.20.58.340">
    <property type="entry name" value="Magnesium transport protein CorA, transmembrane region"/>
    <property type="match status" value="2"/>
</dbReference>
<dbReference type="HAMAP" id="MF_01565">
    <property type="entry name" value="ZntB"/>
    <property type="match status" value="1"/>
</dbReference>
<dbReference type="InterPro" id="IPR045861">
    <property type="entry name" value="CorA_cytoplasmic_dom"/>
</dbReference>
<dbReference type="InterPro" id="IPR045863">
    <property type="entry name" value="CorA_TM1_TM2"/>
</dbReference>
<dbReference type="InterPro" id="IPR002523">
    <property type="entry name" value="MgTranspt_CorA/ZnTranspt_ZntB"/>
</dbReference>
<dbReference type="InterPro" id="IPR023714">
    <property type="entry name" value="Zn_transp_ZntB"/>
</dbReference>
<dbReference type="NCBIfam" id="NF007092">
    <property type="entry name" value="PRK09546.1"/>
    <property type="match status" value="1"/>
</dbReference>
<dbReference type="PANTHER" id="PTHR46494">
    <property type="entry name" value="CORA FAMILY METAL ION TRANSPORTER (EUROFUNG)"/>
    <property type="match status" value="1"/>
</dbReference>
<dbReference type="PANTHER" id="PTHR46494:SF3">
    <property type="entry name" value="ZINC TRANSPORT PROTEIN ZNTB"/>
    <property type="match status" value="1"/>
</dbReference>
<dbReference type="Pfam" id="PF01544">
    <property type="entry name" value="CorA"/>
    <property type="match status" value="1"/>
</dbReference>
<dbReference type="SUPFAM" id="SSF143865">
    <property type="entry name" value="CorA soluble domain-like"/>
    <property type="match status" value="1"/>
</dbReference>
<dbReference type="SUPFAM" id="SSF144083">
    <property type="entry name" value="Magnesium transport protein CorA, transmembrane region"/>
    <property type="match status" value="1"/>
</dbReference>
<comment type="function">
    <text evidence="1">Zinc transporter. Acts as a Zn(2+):proton symporter, which likely mediates zinc ion uptake.</text>
</comment>
<comment type="catalytic activity">
    <reaction evidence="1">
        <text>Zn(2+)(out) + H(+)(out) = Zn(2+)(in) + H(+)(in)</text>
        <dbReference type="Rhea" id="RHEA:71195"/>
        <dbReference type="ChEBI" id="CHEBI:15378"/>
        <dbReference type="ChEBI" id="CHEBI:29105"/>
    </reaction>
    <physiologicalReaction direction="left-to-right" evidence="1">
        <dbReference type="Rhea" id="RHEA:71196"/>
    </physiologicalReaction>
</comment>
<comment type="subcellular location">
    <subcellularLocation>
        <location evidence="1">Cell inner membrane</location>
        <topology evidence="1">Multi-pass membrane protein</topology>
    </subcellularLocation>
</comment>
<comment type="similarity">
    <text evidence="1">Belongs to the CorA metal ion transporter (MIT) (TC 1.A.35) family.</text>
</comment>
<gene>
    <name evidence="1" type="primary">zntB</name>
    <name type="ordered locus">BWG_1176</name>
</gene>
<keyword id="KW-0997">Cell inner membrane</keyword>
<keyword id="KW-1003">Cell membrane</keyword>
<keyword id="KW-0406">Ion transport</keyword>
<keyword id="KW-0472">Membrane</keyword>
<keyword id="KW-0812">Transmembrane</keyword>
<keyword id="KW-1133">Transmembrane helix</keyword>
<keyword id="KW-0813">Transport</keyword>
<keyword id="KW-0862">Zinc</keyword>
<name>ZNTB_ECOBW</name>
<feature type="chain" id="PRO_1000215515" description="Zinc transport protein ZntB">
    <location>
        <begin position="1"/>
        <end position="327"/>
    </location>
</feature>
<feature type="topological domain" description="Cytoplasmic" evidence="1">
    <location>
        <begin position="1"/>
        <end position="273"/>
    </location>
</feature>
<feature type="transmembrane region" description="Helical" evidence="1">
    <location>
        <begin position="274"/>
        <end position="294"/>
    </location>
</feature>
<feature type="topological domain" description="Periplasmic" evidence="1">
    <location>
        <begin position="295"/>
        <end position="300"/>
    </location>
</feature>
<feature type="transmembrane region" description="Helical" evidence="1">
    <location>
        <begin position="301"/>
        <end position="321"/>
    </location>
</feature>
<feature type="topological domain" description="Cytoplasmic" evidence="1">
    <location>
        <begin position="322"/>
        <end position="327"/>
    </location>
</feature>
<proteinExistence type="inferred from homology"/>
<protein>
    <recommendedName>
        <fullName evidence="1">Zinc transport protein ZntB</fullName>
    </recommendedName>
</protein>
<sequence>MEAIKGSDVNVPDAVFAWMLDGRGGVKPLENTDVIDEAHPCWLHLNYVHHDSAQWLATTPLLPNNVRDALAGESTRPRVSRLGEGTLITLRCINGSTDERPDQLVAMRVYMDGRLIVSTRQRKVLALDDVVSDLEEGTGPTDCGGWLVDVCDALTDHSSEFIEQLHDKIIDLEDNLLDQQIPPRGFLALLRKQLIVMRRYMAPQRDVYARLASERLPWMSDDQRRRMQDIADRLGRGLDEIDACIARTGVMADEIAQVMQENLARRTYTMSLMAMVFLPSTFLTGLFGVNLGGIPGGGWQFGFSIFCILLVVLIGGVALWLHRSKWL</sequence>
<reference key="1">
    <citation type="journal article" date="2009" name="J. Bacteriol.">
        <title>Genomic sequencing reveals regulatory mutations and recombinational events in the widely used MC4100 lineage of Escherichia coli K-12.</title>
        <authorList>
            <person name="Ferenci T."/>
            <person name="Zhou Z."/>
            <person name="Betteridge T."/>
            <person name="Ren Y."/>
            <person name="Liu Y."/>
            <person name="Feng L."/>
            <person name="Reeves P.R."/>
            <person name="Wang L."/>
        </authorList>
    </citation>
    <scope>NUCLEOTIDE SEQUENCE [LARGE SCALE GENOMIC DNA]</scope>
    <source>
        <strain>K12 / MC4100 / BW2952</strain>
    </source>
</reference>
<evidence type="ECO:0000255" key="1">
    <source>
        <dbReference type="HAMAP-Rule" id="MF_01565"/>
    </source>
</evidence>
<organism>
    <name type="scientific">Escherichia coli (strain K12 / MC4100 / BW2952)</name>
    <dbReference type="NCBI Taxonomy" id="595496"/>
    <lineage>
        <taxon>Bacteria</taxon>
        <taxon>Pseudomonadati</taxon>
        <taxon>Pseudomonadota</taxon>
        <taxon>Gammaproteobacteria</taxon>
        <taxon>Enterobacterales</taxon>
        <taxon>Enterobacteriaceae</taxon>
        <taxon>Escherichia</taxon>
    </lineage>
</organism>
<accession>C4ZV90</accession>